<name>CML34_ARATH</name>
<comment type="function">
    <text evidence="1">Potential calcium sensor.</text>
</comment>
<comment type="caution">
    <text evidence="3">Although assigned as a calmodulin family member by Ref.4, it only contains EF-hand domains.</text>
</comment>
<reference key="1">
    <citation type="journal article" date="2000" name="Nature">
        <title>Sequence and analysis of chromosome 3 of the plant Arabidopsis thaliana.</title>
        <authorList>
            <person name="Salanoubat M."/>
            <person name="Lemcke K."/>
            <person name="Rieger M."/>
            <person name="Ansorge W."/>
            <person name="Unseld M."/>
            <person name="Fartmann B."/>
            <person name="Valle G."/>
            <person name="Bloecker H."/>
            <person name="Perez-Alonso M."/>
            <person name="Obermaier B."/>
            <person name="Delseny M."/>
            <person name="Boutry M."/>
            <person name="Grivell L.A."/>
            <person name="Mache R."/>
            <person name="Puigdomenech P."/>
            <person name="De Simone V."/>
            <person name="Choisne N."/>
            <person name="Artiguenave F."/>
            <person name="Robert C."/>
            <person name="Brottier P."/>
            <person name="Wincker P."/>
            <person name="Cattolico L."/>
            <person name="Weissenbach J."/>
            <person name="Saurin W."/>
            <person name="Quetier F."/>
            <person name="Schaefer M."/>
            <person name="Mueller-Auer S."/>
            <person name="Gabel C."/>
            <person name="Fuchs M."/>
            <person name="Benes V."/>
            <person name="Wurmbach E."/>
            <person name="Drzonek H."/>
            <person name="Erfle H."/>
            <person name="Jordan N."/>
            <person name="Bangert S."/>
            <person name="Wiedelmann R."/>
            <person name="Kranz H."/>
            <person name="Voss H."/>
            <person name="Holland R."/>
            <person name="Brandt P."/>
            <person name="Nyakatura G."/>
            <person name="Vezzi A."/>
            <person name="D'Angelo M."/>
            <person name="Pallavicini A."/>
            <person name="Toppo S."/>
            <person name="Simionati B."/>
            <person name="Conrad A."/>
            <person name="Hornischer K."/>
            <person name="Kauer G."/>
            <person name="Loehnert T.-H."/>
            <person name="Nordsiek G."/>
            <person name="Reichelt J."/>
            <person name="Scharfe M."/>
            <person name="Schoen O."/>
            <person name="Bargues M."/>
            <person name="Terol J."/>
            <person name="Climent J."/>
            <person name="Navarro P."/>
            <person name="Collado C."/>
            <person name="Perez-Perez A."/>
            <person name="Ottenwaelder B."/>
            <person name="Duchemin D."/>
            <person name="Cooke R."/>
            <person name="Laudie M."/>
            <person name="Berger-Llauro C."/>
            <person name="Purnelle B."/>
            <person name="Masuy D."/>
            <person name="de Haan M."/>
            <person name="Maarse A.C."/>
            <person name="Alcaraz J.-P."/>
            <person name="Cottet A."/>
            <person name="Casacuberta E."/>
            <person name="Monfort A."/>
            <person name="Argiriou A."/>
            <person name="Flores M."/>
            <person name="Liguori R."/>
            <person name="Vitale D."/>
            <person name="Mannhaupt G."/>
            <person name="Haase D."/>
            <person name="Schoof H."/>
            <person name="Rudd S."/>
            <person name="Zaccaria P."/>
            <person name="Mewes H.-W."/>
            <person name="Mayer K.F.X."/>
            <person name="Kaul S."/>
            <person name="Town C.D."/>
            <person name="Koo H.L."/>
            <person name="Tallon L.J."/>
            <person name="Jenkins J."/>
            <person name="Rooney T."/>
            <person name="Rizzo M."/>
            <person name="Walts A."/>
            <person name="Utterback T."/>
            <person name="Fujii C.Y."/>
            <person name="Shea T.P."/>
            <person name="Creasy T.H."/>
            <person name="Haas B."/>
            <person name="Maiti R."/>
            <person name="Wu D."/>
            <person name="Peterson J."/>
            <person name="Van Aken S."/>
            <person name="Pai G."/>
            <person name="Militscher J."/>
            <person name="Sellers P."/>
            <person name="Gill J.E."/>
            <person name="Feldblyum T.V."/>
            <person name="Preuss D."/>
            <person name="Lin X."/>
            <person name="Nierman W.C."/>
            <person name="Salzberg S.L."/>
            <person name="White O."/>
            <person name="Venter J.C."/>
            <person name="Fraser C.M."/>
            <person name="Kaneko T."/>
            <person name="Nakamura Y."/>
            <person name="Sato S."/>
            <person name="Kato T."/>
            <person name="Asamizu E."/>
            <person name="Sasamoto S."/>
            <person name="Kimura T."/>
            <person name="Idesawa K."/>
            <person name="Kawashima K."/>
            <person name="Kishida Y."/>
            <person name="Kiyokawa C."/>
            <person name="Kohara M."/>
            <person name="Matsumoto M."/>
            <person name="Matsuno A."/>
            <person name="Muraki A."/>
            <person name="Nakayama S."/>
            <person name="Nakazaki N."/>
            <person name="Shinpo S."/>
            <person name="Takeuchi C."/>
            <person name="Wada T."/>
            <person name="Watanabe A."/>
            <person name="Yamada M."/>
            <person name="Yasuda M."/>
            <person name="Tabata S."/>
        </authorList>
    </citation>
    <scope>NUCLEOTIDE SEQUENCE [LARGE SCALE GENOMIC DNA]</scope>
    <source>
        <strain>cv. Columbia</strain>
    </source>
</reference>
<reference key="2">
    <citation type="journal article" date="2017" name="Plant J.">
        <title>Araport11: a complete reannotation of the Arabidopsis thaliana reference genome.</title>
        <authorList>
            <person name="Cheng C.Y."/>
            <person name="Krishnakumar V."/>
            <person name="Chan A.P."/>
            <person name="Thibaud-Nissen F."/>
            <person name="Schobel S."/>
            <person name="Town C.D."/>
        </authorList>
    </citation>
    <scope>GENOME REANNOTATION</scope>
    <source>
        <strain>cv. Columbia</strain>
    </source>
</reference>
<reference key="3">
    <citation type="submission" date="2006-11" db="EMBL/GenBank/DDBJ databases">
        <title>Arabidopsis ORF clones.</title>
        <authorList>
            <person name="Bautista V.R."/>
            <person name="Kim C.J."/>
            <person name="Chen H."/>
            <person name="Quinitio C."/>
            <person name="Ecker J.R."/>
        </authorList>
    </citation>
    <scope>NUCLEOTIDE SEQUENCE [LARGE SCALE MRNA]</scope>
    <source>
        <strain>cv. Columbia</strain>
    </source>
</reference>
<reference key="4">
    <citation type="journal article" date="2003" name="New Phytol.">
        <title>Calmodulins and related potential calcium sensors of Arabidopsis.</title>
        <authorList>
            <person name="McCormack E."/>
            <person name="Braam J."/>
        </authorList>
    </citation>
    <scope>GENE FAMILY</scope>
    <scope>NOMENCLATURE</scope>
</reference>
<reference key="5">
    <citation type="journal article" date="2004" name="J. Biomol. NMR">
        <title>Solution structure of a calmodulin-like calcium-binding domain from Arabidopsis thaliana.</title>
        <authorList>
            <person name="Song J."/>
            <person name="Zhao Q."/>
            <person name="Thao S."/>
            <person name="Frederick R.O."/>
            <person name="Markley J.L."/>
        </authorList>
    </citation>
    <scope>STRUCTURE BY NMR OF 2-67</scope>
    <scope>CALCIUM-BINDING</scope>
</reference>
<gene>
    <name type="primary">CML34</name>
    <name type="ordered locus">At3g03410</name>
    <name type="ORF">T21P5.17</name>
</gene>
<feature type="chain" id="PRO_0000073660" description="Probable calcium-binding protein CML34">
    <location>
        <begin position="1"/>
        <end position="131"/>
    </location>
</feature>
<feature type="domain" description="EF-hand 1" evidence="2">
    <location>
        <begin position="1"/>
        <end position="33"/>
    </location>
</feature>
<feature type="domain" description="EF-hand 2" evidence="2">
    <location>
        <begin position="34"/>
        <end position="69"/>
    </location>
</feature>
<feature type="domain" description="EF-hand 3" evidence="2">
    <location>
        <begin position="70"/>
        <end position="97"/>
    </location>
</feature>
<feature type="domain" description="EF-hand 4" evidence="2">
    <location>
        <begin position="98"/>
        <end position="131"/>
    </location>
</feature>
<feature type="binding site" evidence="2">
    <location>
        <position position="11"/>
    </location>
    <ligand>
        <name>Ca(2+)</name>
        <dbReference type="ChEBI" id="CHEBI:29108"/>
        <label>1</label>
    </ligand>
</feature>
<feature type="binding site" evidence="2">
    <location>
        <position position="13"/>
    </location>
    <ligand>
        <name>Ca(2+)</name>
        <dbReference type="ChEBI" id="CHEBI:29108"/>
        <label>1</label>
    </ligand>
</feature>
<feature type="binding site" evidence="2">
    <location>
        <position position="15"/>
    </location>
    <ligand>
        <name>Ca(2+)</name>
        <dbReference type="ChEBI" id="CHEBI:29108"/>
        <label>1</label>
    </ligand>
</feature>
<feature type="binding site" evidence="2">
    <location>
        <position position="17"/>
    </location>
    <ligand>
        <name>Ca(2+)</name>
        <dbReference type="ChEBI" id="CHEBI:29108"/>
        <label>1</label>
    </ligand>
</feature>
<feature type="binding site" evidence="2">
    <location>
        <position position="22"/>
    </location>
    <ligand>
        <name>Ca(2+)</name>
        <dbReference type="ChEBI" id="CHEBI:29108"/>
        <label>1</label>
    </ligand>
</feature>
<feature type="binding site" evidence="2">
    <location>
        <position position="47"/>
    </location>
    <ligand>
        <name>Ca(2+)</name>
        <dbReference type="ChEBI" id="CHEBI:29108"/>
        <label>2</label>
    </ligand>
</feature>
<feature type="binding site" evidence="2">
    <location>
        <position position="49"/>
    </location>
    <ligand>
        <name>Ca(2+)</name>
        <dbReference type="ChEBI" id="CHEBI:29108"/>
        <label>2</label>
    </ligand>
</feature>
<feature type="binding site" evidence="2">
    <location>
        <position position="51"/>
    </location>
    <ligand>
        <name>Ca(2+)</name>
        <dbReference type="ChEBI" id="CHEBI:29108"/>
        <label>2</label>
    </ligand>
</feature>
<feature type="binding site" evidence="2">
    <location>
        <position position="53"/>
    </location>
    <ligand>
        <name>Ca(2+)</name>
        <dbReference type="ChEBI" id="CHEBI:29108"/>
        <label>2</label>
    </ligand>
</feature>
<feature type="binding site" evidence="2">
    <location>
        <position position="58"/>
    </location>
    <ligand>
        <name>Ca(2+)</name>
        <dbReference type="ChEBI" id="CHEBI:29108"/>
        <label>2</label>
    </ligand>
</feature>
<feature type="binding site" evidence="2">
    <location>
        <position position="111"/>
    </location>
    <ligand>
        <name>Ca(2+)</name>
        <dbReference type="ChEBI" id="CHEBI:29108"/>
        <label>3</label>
    </ligand>
</feature>
<feature type="binding site" evidence="2">
    <location>
        <position position="113"/>
    </location>
    <ligand>
        <name>Ca(2+)</name>
        <dbReference type="ChEBI" id="CHEBI:29108"/>
        <label>3</label>
    </ligand>
</feature>
<feature type="binding site" evidence="2">
    <location>
        <position position="115"/>
    </location>
    <ligand>
        <name>Ca(2+)</name>
        <dbReference type="ChEBI" id="CHEBI:29108"/>
        <label>3</label>
    </ligand>
</feature>
<feature type="binding site" evidence="2">
    <location>
        <position position="117"/>
    </location>
    <ligand>
        <name>Ca(2+)</name>
        <dbReference type="ChEBI" id="CHEBI:29108"/>
        <label>3</label>
    </ligand>
</feature>
<feature type="binding site" evidence="2">
    <location>
        <position position="122"/>
    </location>
    <ligand>
        <name>Ca(2+)</name>
        <dbReference type="ChEBI" id="CHEBI:29108"/>
        <label>3</label>
    </ligand>
</feature>
<feature type="helix" evidence="4">
    <location>
        <begin position="3"/>
        <end position="10"/>
    </location>
</feature>
<feature type="strand" evidence="4">
    <location>
        <begin position="14"/>
        <end position="16"/>
    </location>
</feature>
<feature type="helix" evidence="4">
    <location>
        <begin position="20"/>
        <end position="29"/>
    </location>
</feature>
<feature type="helix" evidence="4">
    <location>
        <begin position="36"/>
        <end position="46"/>
    </location>
</feature>
<feature type="strand" evidence="4">
    <location>
        <begin position="49"/>
        <end position="54"/>
    </location>
</feature>
<feature type="helix" evidence="4">
    <location>
        <begin position="56"/>
        <end position="64"/>
    </location>
</feature>
<organism>
    <name type="scientific">Arabidopsis thaliana</name>
    <name type="common">Mouse-ear cress</name>
    <dbReference type="NCBI Taxonomy" id="3702"/>
    <lineage>
        <taxon>Eukaryota</taxon>
        <taxon>Viridiplantae</taxon>
        <taxon>Streptophyta</taxon>
        <taxon>Embryophyta</taxon>
        <taxon>Tracheophyta</taxon>
        <taxon>Spermatophyta</taxon>
        <taxon>Magnoliopsida</taxon>
        <taxon>eudicotyledons</taxon>
        <taxon>Gunneridae</taxon>
        <taxon>Pentapetalae</taxon>
        <taxon>rosids</taxon>
        <taxon>malvids</taxon>
        <taxon>Brassicales</taxon>
        <taxon>Brassicaceae</taxon>
        <taxon>Camelineae</taxon>
        <taxon>Arabidopsis</taxon>
    </lineage>
</organism>
<protein>
    <recommendedName>
        <fullName>Probable calcium-binding protein CML34</fullName>
    </recommendedName>
    <alternativeName>
        <fullName>Calmodulin-like protein 2</fullName>
    </alternativeName>
    <alternativeName>
        <fullName>Calmodulin-like protein 34</fullName>
    </alternativeName>
</protein>
<evidence type="ECO:0000250" key="1"/>
<evidence type="ECO:0000255" key="2">
    <source>
        <dbReference type="PROSITE-ProRule" id="PRU00448"/>
    </source>
</evidence>
<evidence type="ECO:0000305" key="3"/>
<evidence type="ECO:0007829" key="4">
    <source>
        <dbReference type="PDB" id="1TIZ"/>
    </source>
</evidence>
<dbReference type="EMBL" id="AC009895">
    <property type="protein sequence ID" value="AAF01604.1"/>
    <property type="molecule type" value="Genomic_DNA"/>
</dbReference>
<dbReference type="EMBL" id="CP002686">
    <property type="protein sequence ID" value="AEE73941.1"/>
    <property type="molecule type" value="Genomic_DNA"/>
</dbReference>
<dbReference type="EMBL" id="BT029360">
    <property type="protein sequence ID" value="ABK32174.1"/>
    <property type="molecule type" value="mRNA"/>
</dbReference>
<dbReference type="RefSeq" id="NP_186991.1">
    <property type="nucleotide sequence ID" value="NM_111212.1"/>
</dbReference>
<dbReference type="PDB" id="1TIZ">
    <property type="method" value="NMR"/>
    <property type="chains" value="A=2-67"/>
</dbReference>
<dbReference type="PDBsum" id="1TIZ"/>
<dbReference type="SMR" id="Q9SRP5"/>
<dbReference type="FunCoup" id="Q9SRP5">
    <property type="interactions" value="202"/>
</dbReference>
<dbReference type="STRING" id="3702.Q9SRP5"/>
<dbReference type="PaxDb" id="3702-AT3G03410.1"/>
<dbReference type="ProteomicsDB" id="240902"/>
<dbReference type="EnsemblPlants" id="AT3G03410.1">
    <property type="protein sequence ID" value="AT3G03410.1"/>
    <property type="gene ID" value="AT3G03410"/>
</dbReference>
<dbReference type="GeneID" id="821262"/>
<dbReference type="Gramene" id="AT3G03410.1">
    <property type="protein sequence ID" value="AT3G03410.1"/>
    <property type="gene ID" value="AT3G03410"/>
</dbReference>
<dbReference type="KEGG" id="ath:AT3G03410"/>
<dbReference type="Araport" id="AT3G03410"/>
<dbReference type="TAIR" id="AT3G03410"/>
<dbReference type="eggNOG" id="KOG0027">
    <property type="taxonomic scope" value="Eukaryota"/>
</dbReference>
<dbReference type="HOGENOM" id="CLU_061288_20_7_1"/>
<dbReference type="InParanoid" id="Q9SRP5"/>
<dbReference type="OMA" id="CTEETCA"/>
<dbReference type="OrthoDB" id="26525at2759"/>
<dbReference type="PhylomeDB" id="Q9SRP5"/>
<dbReference type="EvolutionaryTrace" id="Q9SRP5"/>
<dbReference type="PRO" id="PR:Q9SRP5"/>
<dbReference type="Proteomes" id="UP000006548">
    <property type="component" value="Chromosome 3"/>
</dbReference>
<dbReference type="ExpressionAtlas" id="Q9SRP5">
    <property type="expression patterns" value="baseline and differential"/>
</dbReference>
<dbReference type="GO" id="GO:0005509">
    <property type="term" value="F:calcium ion binding"/>
    <property type="evidence" value="ECO:0007669"/>
    <property type="project" value="InterPro"/>
</dbReference>
<dbReference type="CDD" id="cd00051">
    <property type="entry name" value="EFh"/>
    <property type="match status" value="1"/>
</dbReference>
<dbReference type="FunFam" id="1.10.238.10:FF:000003">
    <property type="entry name" value="Calmodulin A"/>
    <property type="match status" value="1"/>
</dbReference>
<dbReference type="FunFam" id="1.10.238.10:FF:000505">
    <property type="entry name" value="Probable calcium-binding protein CML34"/>
    <property type="match status" value="1"/>
</dbReference>
<dbReference type="Gene3D" id="1.10.238.10">
    <property type="entry name" value="EF-hand"/>
    <property type="match status" value="2"/>
</dbReference>
<dbReference type="InterPro" id="IPR050145">
    <property type="entry name" value="Centrin_CML-like"/>
</dbReference>
<dbReference type="InterPro" id="IPR011992">
    <property type="entry name" value="EF-hand-dom_pair"/>
</dbReference>
<dbReference type="InterPro" id="IPR018247">
    <property type="entry name" value="EF_Hand_1_Ca_BS"/>
</dbReference>
<dbReference type="InterPro" id="IPR002048">
    <property type="entry name" value="EF_hand_dom"/>
</dbReference>
<dbReference type="PANTHER" id="PTHR23050">
    <property type="entry name" value="CALCIUM BINDING PROTEIN"/>
    <property type="match status" value="1"/>
</dbReference>
<dbReference type="Pfam" id="PF13499">
    <property type="entry name" value="EF-hand_7"/>
    <property type="match status" value="2"/>
</dbReference>
<dbReference type="SMART" id="SM00054">
    <property type="entry name" value="EFh"/>
    <property type="match status" value="4"/>
</dbReference>
<dbReference type="SUPFAM" id="SSF47473">
    <property type="entry name" value="EF-hand"/>
    <property type="match status" value="1"/>
</dbReference>
<dbReference type="PROSITE" id="PS00018">
    <property type="entry name" value="EF_HAND_1"/>
    <property type="match status" value="3"/>
</dbReference>
<dbReference type="PROSITE" id="PS50222">
    <property type="entry name" value="EF_HAND_2"/>
    <property type="match status" value="4"/>
</dbReference>
<accession>Q9SRP5</accession>
<accession>A0JPZ0</accession>
<proteinExistence type="evidence at protein level"/>
<sequence>MSAKRVFEKFDKNKDGKLSLDEFREVALAFSPYFTQEDIVKFFEEIDVDGNGELNADEFTSCIEKMLKEVFVFCDVDGDGKIPASESYVTMTSLGKKFTEETSAEKVRAADVDGDGYLNFDEFMALVIGDI</sequence>
<keyword id="KW-0002">3D-structure</keyword>
<keyword id="KW-0106">Calcium</keyword>
<keyword id="KW-0479">Metal-binding</keyword>
<keyword id="KW-1185">Reference proteome</keyword>
<keyword id="KW-0677">Repeat</keyword>